<keyword id="KW-0031">Aminopeptidase</keyword>
<keyword id="KW-0963">Cytoplasm</keyword>
<keyword id="KW-0378">Hydrolase</keyword>
<keyword id="KW-0479">Metal-binding</keyword>
<keyword id="KW-0482">Metalloprotease</keyword>
<keyword id="KW-0645">Protease</keyword>
<keyword id="KW-0862">Zinc</keyword>
<reference key="1">
    <citation type="journal article" date="2012" name="BMC Microbiol.">
        <title>Genome sequence of Desulfitobacterium hafniense DCB-2, a Gram-positive anaerobe capable of dehalogenation and metal reduction.</title>
        <authorList>
            <person name="Kim S.H."/>
            <person name="Harzman C."/>
            <person name="Davis J.K."/>
            <person name="Hutcheson R."/>
            <person name="Broderick J.B."/>
            <person name="Marsh T.L."/>
            <person name="Tiedje J.M."/>
        </authorList>
    </citation>
    <scope>NUCLEOTIDE SEQUENCE [LARGE SCALE GENOMIC DNA]</scope>
    <source>
        <strain>DSM 10664 / DCB-2</strain>
    </source>
</reference>
<gene>
    <name evidence="1" type="primary">pepT</name>
    <name type="ordered locus">Dhaf_3224</name>
</gene>
<protein>
    <recommendedName>
        <fullName evidence="1">Peptidase T</fullName>
        <ecNumber evidence="1">3.4.11.4</ecNumber>
    </recommendedName>
    <alternativeName>
        <fullName evidence="1">Aminotripeptidase</fullName>
        <shortName evidence="1">Tripeptidase</shortName>
    </alternativeName>
    <alternativeName>
        <fullName evidence="1">Tripeptide aminopeptidase</fullName>
    </alternativeName>
</protein>
<comment type="function">
    <text evidence="1">Cleaves the N-terminal amino acid of tripeptides.</text>
</comment>
<comment type="catalytic activity">
    <reaction evidence="1">
        <text>Release of the N-terminal residue from a tripeptide.</text>
        <dbReference type="EC" id="3.4.11.4"/>
    </reaction>
</comment>
<comment type="cofactor">
    <cofactor evidence="1">
        <name>Zn(2+)</name>
        <dbReference type="ChEBI" id="CHEBI:29105"/>
    </cofactor>
    <text evidence="1">Binds 2 Zn(2+) ions per subunit.</text>
</comment>
<comment type="subcellular location">
    <subcellularLocation>
        <location evidence="1">Cytoplasm</location>
    </subcellularLocation>
</comment>
<comment type="similarity">
    <text evidence="1">Belongs to the peptidase M20B family.</text>
</comment>
<feature type="chain" id="PRO_1000200886" description="Peptidase T">
    <location>
        <begin position="1"/>
        <end position="410"/>
    </location>
</feature>
<feature type="active site" evidence="1">
    <location>
        <position position="79"/>
    </location>
</feature>
<feature type="active site" description="Proton acceptor" evidence="1">
    <location>
        <position position="174"/>
    </location>
</feature>
<feature type="binding site" evidence="1">
    <location>
        <position position="77"/>
    </location>
    <ligand>
        <name>Zn(2+)</name>
        <dbReference type="ChEBI" id="CHEBI:29105"/>
        <label>1</label>
    </ligand>
</feature>
<feature type="binding site" evidence="1">
    <location>
        <position position="140"/>
    </location>
    <ligand>
        <name>Zn(2+)</name>
        <dbReference type="ChEBI" id="CHEBI:29105"/>
        <label>1</label>
    </ligand>
</feature>
<feature type="binding site" evidence="1">
    <location>
        <position position="140"/>
    </location>
    <ligand>
        <name>Zn(2+)</name>
        <dbReference type="ChEBI" id="CHEBI:29105"/>
        <label>2</label>
    </ligand>
</feature>
<feature type="binding site" evidence="1">
    <location>
        <position position="175"/>
    </location>
    <ligand>
        <name>Zn(2+)</name>
        <dbReference type="ChEBI" id="CHEBI:29105"/>
        <label>2</label>
    </ligand>
</feature>
<feature type="binding site" evidence="1">
    <location>
        <position position="197"/>
    </location>
    <ligand>
        <name>Zn(2+)</name>
        <dbReference type="ChEBI" id="CHEBI:29105"/>
        <label>1</label>
    </ligand>
</feature>
<feature type="binding site" evidence="1">
    <location>
        <position position="379"/>
    </location>
    <ligand>
        <name>Zn(2+)</name>
        <dbReference type="ChEBI" id="CHEBI:29105"/>
        <label>2</label>
    </ligand>
</feature>
<accession>B8G1J0</accession>
<evidence type="ECO:0000255" key="1">
    <source>
        <dbReference type="HAMAP-Rule" id="MF_00550"/>
    </source>
</evidence>
<name>PEPT_DESHD</name>
<sequence>MSSVIERFLRYAAIDTQSNEESQTTPSTGKQLNLARLLEQELKELGLQDARIQEGYVYGTLPANSTKAIPAIGFIAHMDTSPDFSGTDVKAQLVENYDGQDILLNPEHNLVLSPADFPELLDYIGKTLITTDGTTLLGADDKAGIAEIMTAIAYLTAHPEIEHGTICVAFTPDEEIGRGADQFDVAGFGADFAYTVDGGSIGELEYENFNAAKAIVKVKGRNVHPGNAKNKMINSILLANEYIVKLPPQETPATTEGYEGFYHLNDIRGDVEETTLYYIIRDFAEDSFAKRKETMLNLAEECNKKYGSGHFHVEITDQYKNMKEKIQPVMHIVDKAQKAMETVGVKPLIKPIRGGTDGSRLSFMGLPTPNLFTGGHNYHGRYEFIPTFAMEKSVEVILKIIELYAEEHSN</sequence>
<organism>
    <name type="scientific">Desulfitobacterium hafniense (strain DSM 10664 / DCB-2)</name>
    <dbReference type="NCBI Taxonomy" id="272564"/>
    <lineage>
        <taxon>Bacteria</taxon>
        <taxon>Bacillati</taxon>
        <taxon>Bacillota</taxon>
        <taxon>Clostridia</taxon>
        <taxon>Eubacteriales</taxon>
        <taxon>Desulfitobacteriaceae</taxon>
        <taxon>Desulfitobacterium</taxon>
    </lineage>
</organism>
<dbReference type="EC" id="3.4.11.4" evidence="1"/>
<dbReference type="EMBL" id="CP001336">
    <property type="protein sequence ID" value="ACL21243.1"/>
    <property type="molecule type" value="Genomic_DNA"/>
</dbReference>
<dbReference type="RefSeq" id="WP_015944480.1">
    <property type="nucleotide sequence ID" value="NC_011830.1"/>
</dbReference>
<dbReference type="SMR" id="B8G1J0"/>
<dbReference type="MEROPS" id="M20.003"/>
<dbReference type="KEGG" id="dhd:Dhaf_3224"/>
<dbReference type="HOGENOM" id="CLU_053676_0_0_9"/>
<dbReference type="Proteomes" id="UP000007726">
    <property type="component" value="Chromosome"/>
</dbReference>
<dbReference type="GO" id="GO:0005829">
    <property type="term" value="C:cytosol"/>
    <property type="evidence" value="ECO:0007669"/>
    <property type="project" value="TreeGrafter"/>
</dbReference>
<dbReference type="GO" id="GO:0008237">
    <property type="term" value="F:metallopeptidase activity"/>
    <property type="evidence" value="ECO:0007669"/>
    <property type="project" value="UniProtKB-KW"/>
</dbReference>
<dbReference type="GO" id="GO:0045148">
    <property type="term" value="F:tripeptide aminopeptidase activity"/>
    <property type="evidence" value="ECO:0007669"/>
    <property type="project" value="UniProtKB-UniRule"/>
</dbReference>
<dbReference type="GO" id="GO:0008270">
    <property type="term" value="F:zinc ion binding"/>
    <property type="evidence" value="ECO:0007669"/>
    <property type="project" value="UniProtKB-UniRule"/>
</dbReference>
<dbReference type="GO" id="GO:0043171">
    <property type="term" value="P:peptide catabolic process"/>
    <property type="evidence" value="ECO:0007669"/>
    <property type="project" value="UniProtKB-UniRule"/>
</dbReference>
<dbReference type="GO" id="GO:0006508">
    <property type="term" value="P:proteolysis"/>
    <property type="evidence" value="ECO:0007669"/>
    <property type="project" value="UniProtKB-UniRule"/>
</dbReference>
<dbReference type="CDD" id="cd03892">
    <property type="entry name" value="M20_peptT"/>
    <property type="match status" value="1"/>
</dbReference>
<dbReference type="Gene3D" id="3.30.70.360">
    <property type="match status" value="1"/>
</dbReference>
<dbReference type="Gene3D" id="3.40.630.10">
    <property type="entry name" value="Zn peptidases"/>
    <property type="match status" value="1"/>
</dbReference>
<dbReference type="HAMAP" id="MF_00550">
    <property type="entry name" value="Aminopeptidase_M20"/>
    <property type="match status" value="1"/>
</dbReference>
<dbReference type="InterPro" id="IPR001261">
    <property type="entry name" value="ArgE/DapE_CS"/>
</dbReference>
<dbReference type="InterPro" id="IPR036264">
    <property type="entry name" value="Bact_exopeptidase_dim_dom"/>
</dbReference>
<dbReference type="InterPro" id="IPR002933">
    <property type="entry name" value="Peptidase_M20"/>
</dbReference>
<dbReference type="InterPro" id="IPR011650">
    <property type="entry name" value="Peptidase_M20_dimer"/>
</dbReference>
<dbReference type="InterPro" id="IPR010161">
    <property type="entry name" value="Peptidase_M20B"/>
</dbReference>
<dbReference type="NCBIfam" id="TIGR01882">
    <property type="entry name" value="peptidase-T"/>
    <property type="match status" value="1"/>
</dbReference>
<dbReference type="NCBIfam" id="NF003976">
    <property type="entry name" value="PRK05469.1"/>
    <property type="match status" value="1"/>
</dbReference>
<dbReference type="NCBIfam" id="NF009920">
    <property type="entry name" value="PRK13381.1"/>
    <property type="match status" value="1"/>
</dbReference>
<dbReference type="PANTHER" id="PTHR42994">
    <property type="entry name" value="PEPTIDASE T"/>
    <property type="match status" value="1"/>
</dbReference>
<dbReference type="PANTHER" id="PTHR42994:SF1">
    <property type="entry name" value="PEPTIDASE T"/>
    <property type="match status" value="1"/>
</dbReference>
<dbReference type="Pfam" id="PF07687">
    <property type="entry name" value="M20_dimer"/>
    <property type="match status" value="1"/>
</dbReference>
<dbReference type="Pfam" id="PF01546">
    <property type="entry name" value="Peptidase_M20"/>
    <property type="match status" value="1"/>
</dbReference>
<dbReference type="PIRSF" id="PIRSF037215">
    <property type="entry name" value="Peptidase_M20B"/>
    <property type="match status" value="1"/>
</dbReference>
<dbReference type="SUPFAM" id="SSF55031">
    <property type="entry name" value="Bacterial exopeptidase dimerisation domain"/>
    <property type="match status" value="1"/>
</dbReference>
<dbReference type="SUPFAM" id="SSF53187">
    <property type="entry name" value="Zn-dependent exopeptidases"/>
    <property type="match status" value="1"/>
</dbReference>
<dbReference type="PROSITE" id="PS00758">
    <property type="entry name" value="ARGE_DAPE_CPG2_1"/>
    <property type="match status" value="1"/>
</dbReference>
<dbReference type="PROSITE" id="PS00759">
    <property type="entry name" value="ARGE_DAPE_CPG2_2"/>
    <property type="match status" value="1"/>
</dbReference>
<proteinExistence type="inferred from homology"/>